<feature type="chain" id="PRO_0000133820" description="DNA-directed RNA polymerase subunit Rpo6">
    <location>
        <begin position="1"/>
        <end position="57"/>
    </location>
</feature>
<accession>P62015</accession>
<accession>Q9V193</accession>
<organism>
    <name type="scientific">Pyrococcus horikoshii (strain ATCC 700860 / DSM 12428 / JCM 9974 / NBRC 100139 / OT-3)</name>
    <dbReference type="NCBI Taxonomy" id="70601"/>
    <lineage>
        <taxon>Archaea</taxon>
        <taxon>Methanobacteriati</taxon>
        <taxon>Methanobacteriota</taxon>
        <taxon>Thermococci</taxon>
        <taxon>Thermococcales</taxon>
        <taxon>Thermococcaceae</taxon>
        <taxon>Pyrococcus</taxon>
    </lineage>
</organism>
<gene>
    <name evidence="1" type="primary">rpo6</name>
    <name evidence="1" type="synonym">rpoK</name>
    <name type="ordered locus">PH1631.1</name>
</gene>
<keyword id="KW-0963">Cytoplasm</keyword>
<keyword id="KW-0240">DNA-directed RNA polymerase</keyword>
<keyword id="KW-0548">Nucleotidyltransferase</keyword>
<keyword id="KW-0804">Transcription</keyword>
<keyword id="KW-0808">Transferase</keyword>
<proteinExistence type="inferred from homology"/>
<protein>
    <recommendedName>
        <fullName evidence="1">DNA-directed RNA polymerase subunit Rpo6</fullName>
        <ecNumber evidence="1">2.7.7.6</ecNumber>
    </recommendedName>
    <alternativeName>
        <fullName evidence="1">DNA-directed RNA polymerase subunit K</fullName>
    </alternativeName>
</protein>
<reference key="1">
    <citation type="journal article" date="1998" name="DNA Res.">
        <title>Complete sequence and gene organization of the genome of a hyper-thermophilic archaebacterium, Pyrococcus horikoshii OT3.</title>
        <authorList>
            <person name="Kawarabayasi Y."/>
            <person name="Sawada M."/>
            <person name="Horikawa H."/>
            <person name="Haikawa Y."/>
            <person name="Hino Y."/>
            <person name="Yamamoto S."/>
            <person name="Sekine M."/>
            <person name="Baba S."/>
            <person name="Kosugi H."/>
            <person name="Hosoyama A."/>
            <person name="Nagai Y."/>
            <person name="Sakai M."/>
            <person name="Ogura K."/>
            <person name="Otsuka R."/>
            <person name="Nakazawa H."/>
            <person name="Takamiya M."/>
            <person name="Ohfuku Y."/>
            <person name="Funahashi T."/>
            <person name="Tanaka T."/>
            <person name="Kudoh Y."/>
            <person name="Yamazaki J."/>
            <person name="Kushida N."/>
            <person name="Oguchi A."/>
            <person name="Aoki K."/>
            <person name="Yoshizawa T."/>
            <person name="Nakamura Y."/>
            <person name="Robb F.T."/>
            <person name="Horikoshi K."/>
            <person name="Masuchi Y."/>
            <person name="Shizuya H."/>
            <person name="Kikuchi H."/>
        </authorList>
    </citation>
    <scope>NUCLEOTIDE SEQUENCE [LARGE SCALE GENOMIC DNA]</scope>
    <source>
        <strain>ATCC 700860 / DSM 12428 / JCM 9974 / NBRC 100139 / OT-3</strain>
    </source>
</reference>
<comment type="function">
    <text evidence="1">DNA-dependent RNA polymerase (RNAP) catalyzes the transcription of DNA into RNA using the four ribonucleoside triphosphates as substrates.</text>
</comment>
<comment type="catalytic activity">
    <reaction evidence="1">
        <text>RNA(n) + a ribonucleoside 5'-triphosphate = RNA(n+1) + diphosphate</text>
        <dbReference type="Rhea" id="RHEA:21248"/>
        <dbReference type="Rhea" id="RHEA-COMP:14527"/>
        <dbReference type="Rhea" id="RHEA-COMP:17342"/>
        <dbReference type="ChEBI" id="CHEBI:33019"/>
        <dbReference type="ChEBI" id="CHEBI:61557"/>
        <dbReference type="ChEBI" id="CHEBI:140395"/>
        <dbReference type="EC" id="2.7.7.6"/>
    </reaction>
</comment>
<comment type="subunit">
    <text evidence="1">Part of the RNA polymerase complex.</text>
</comment>
<comment type="subcellular location">
    <subcellularLocation>
        <location evidence="1">Cytoplasm</location>
    </subcellularLocation>
</comment>
<comment type="similarity">
    <text evidence="1">Belongs to the archaeal Rpo6/eukaryotic RPB6 RNA polymerase subunit family.</text>
</comment>
<name>RPO6_PYRHO</name>
<evidence type="ECO:0000255" key="1">
    <source>
        <dbReference type="HAMAP-Rule" id="MF_00192"/>
    </source>
</evidence>
<dbReference type="EC" id="2.7.7.6" evidence="1"/>
<dbReference type="EMBL" id="BA000001">
    <property type="status" value="NOT_ANNOTATED_CDS"/>
    <property type="molecule type" value="Genomic_DNA"/>
</dbReference>
<dbReference type="RefSeq" id="WP_010867659.1">
    <property type="nucleotide sequence ID" value="NC_000961.1"/>
</dbReference>
<dbReference type="SMR" id="P62015"/>
<dbReference type="OrthoDB" id="10567at2157"/>
<dbReference type="Proteomes" id="UP000000752">
    <property type="component" value="Chromosome"/>
</dbReference>
<dbReference type="GO" id="GO:0005737">
    <property type="term" value="C:cytoplasm"/>
    <property type="evidence" value="ECO:0007669"/>
    <property type="project" value="UniProtKB-SubCell"/>
</dbReference>
<dbReference type="GO" id="GO:0000428">
    <property type="term" value="C:DNA-directed RNA polymerase complex"/>
    <property type="evidence" value="ECO:0007669"/>
    <property type="project" value="UniProtKB-KW"/>
</dbReference>
<dbReference type="GO" id="GO:0003677">
    <property type="term" value="F:DNA binding"/>
    <property type="evidence" value="ECO:0007669"/>
    <property type="project" value="UniProtKB-UniRule"/>
</dbReference>
<dbReference type="GO" id="GO:0003899">
    <property type="term" value="F:DNA-directed RNA polymerase activity"/>
    <property type="evidence" value="ECO:0007669"/>
    <property type="project" value="UniProtKB-UniRule"/>
</dbReference>
<dbReference type="GO" id="GO:0006360">
    <property type="term" value="P:transcription by RNA polymerase I"/>
    <property type="evidence" value="ECO:0007669"/>
    <property type="project" value="TreeGrafter"/>
</dbReference>
<dbReference type="GO" id="GO:0006366">
    <property type="term" value="P:transcription by RNA polymerase II"/>
    <property type="evidence" value="ECO:0007669"/>
    <property type="project" value="TreeGrafter"/>
</dbReference>
<dbReference type="GO" id="GO:0042797">
    <property type="term" value="P:tRNA transcription by RNA polymerase III"/>
    <property type="evidence" value="ECO:0007669"/>
    <property type="project" value="TreeGrafter"/>
</dbReference>
<dbReference type="Gene3D" id="3.90.940.10">
    <property type="match status" value="1"/>
</dbReference>
<dbReference type="HAMAP" id="MF_00192">
    <property type="entry name" value="RNApol_arch_Rpo6"/>
    <property type="match status" value="1"/>
</dbReference>
<dbReference type="InterPro" id="IPR020708">
    <property type="entry name" value="DNA-dir_RNA_polK_14-18kDa_CS"/>
</dbReference>
<dbReference type="InterPro" id="IPR006110">
    <property type="entry name" value="Pol_omega/Rpo6/RPB6"/>
</dbReference>
<dbReference type="InterPro" id="IPR036161">
    <property type="entry name" value="RPB6/omega-like_sf"/>
</dbReference>
<dbReference type="InterPro" id="IPR006111">
    <property type="entry name" value="Rpo6/Rpb6"/>
</dbReference>
<dbReference type="NCBIfam" id="NF002208">
    <property type="entry name" value="PRK01099.1-3"/>
    <property type="match status" value="1"/>
</dbReference>
<dbReference type="PANTHER" id="PTHR47227">
    <property type="entry name" value="DNA-DIRECTED RNA POLYMERASE SUBUNIT K"/>
    <property type="match status" value="1"/>
</dbReference>
<dbReference type="PANTHER" id="PTHR47227:SF5">
    <property type="entry name" value="DNA-DIRECTED RNA POLYMERASES I, II, AND III SUBUNIT RPABC2"/>
    <property type="match status" value="1"/>
</dbReference>
<dbReference type="Pfam" id="PF01192">
    <property type="entry name" value="RNA_pol_Rpb6"/>
    <property type="match status" value="1"/>
</dbReference>
<dbReference type="PIRSF" id="PIRSF000778">
    <property type="entry name" value="RpoK/RPB6"/>
    <property type="match status" value="1"/>
</dbReference>
<dbReference type="SUPFAM" id="SSF63562">
    <property type="entry name" value="RPB6/omega subunit-like"/>
    <property type="match status" value="1"/>
</dbReference>
<dbReference type="PROSITE" id="PS01111">
    <property type="entry name" value="RNA_POL_K_14KD"/>
    <property type="match status" value="1"/>
</dbReference>
<sequence length="57" mass="6271">MFKYTRFEKARIIGARALQIAMGAPVLIDVPEGITPLEAAIMEFEKGVIPITVIRPS</sequence>